<dbReference type="EMBL" id="CP000886">
    <property type="protein sequence ID" value="ABX67820.1"/>
    <property type="molecule type" value="Genomic_DNA"/>
</dbReference>
<dbReference type="RefSeq" id="WP_001284251.1">
    <property type="nucleotide sequence ID" value="NC_010102.1"/>
</dbReference>
<dbReference type="SMR" id="A9N6S3"/>
<dbReference type="KEGG" id="spq:SPAB_02439"/>
<dbReference type="PATRIC" id="fig|1016998.12.peg.2307"/>
<dbReference type="HOGENOM" id="CLU_144710_3_1_6"/>
<dbReference type="BioCyc" id="SENT1016998:SPAB_RS09905-MONOMER"/>
<dbReference type="Proteomes" id="UP000008556">
    <property type="component" value="Chromosome"/>
</dbReference>
<dbReference type="Gene3D" id="1.10.1660.10">
    <property type="match status" value="1"/>
</dbReference>
<dbReference type="HAMAP" id="MF_01155">
    <property type="entry name" value="CbpM"/>
    <property type="match status" value="1"/>
</dbReference>
<dbReference type="InterPro" id="IPR022835">
    <property type="entry name" value="CbpM"/>
</dbReference>
<dbReference type="NCBIfam" id="NF007617">
    <property type="entry name" value="PRK10265.1"/>
    <property type="match status" value="1"/>
</dbReference>
<dbReference type="Pfam" id="PF13591">
    <property type="entry name" value="MerR_2"/>
    <property type="match status" value="1"/>
</dbReference>
<proteinExistence type="inferred from homology"/>
<sequence length="101" mass="11595">MANITVTFTITEFCLHTGVTEEELNEIVGLGVIEPYEDDNADWQFDDRAASVVQRALRLREELALDWPGIAVALTLLEENSRLREENRLLLQRLSRFISHP</sequence>
<reference key="1">
    <citation type="submission" date="2007-11" db="EMBL/GenBank/DDBJ databases">
        <authorList>
            <consortium name="The Salmonella enterica serovar Paratyphi B Genome Sequencing Project"/>
            <person name="McClelland M."/>
            <person name="Sanderson E.K."/>
            <person name="Porwollik S."/>
            <person name="Spieth J."/>
            <person name="Clifton W.S."/>
            <person name="Fulton R."/>
            <person name="Cordes M."/>
            <person name="Wollam A."/>
            <person name="Shah N."/>
            <person name="Pepin K."/>
            <person name="Bhonagiri V."/>
            <person name="Nash W."/>
            <person name="Johnson M."/>
            <person name="Thiruvilangam P."/>
            <person name="Wilson R."/>
        </authorList>
    </citation>
    <scope>NUCLEOTIDE SEQUENCE [LARGE SCALE GENOMIC DNA]</scope>
    <source>
        <strain>ATCC BAA-1250 / SPB7</strain>
    </source>
</reference>
<organism>
    <name type="scientific">Salmonella paratyphi B (strain ATCC BAA-1250 / SPB7)</name>
    <dbReference type="NCBI Taxonomy" id="1016998"/>
    <lineage>
        <taxon>Bacteria</taxon>
        <taxon>Pseudomonadati</taxon>
        <taxon>Pseudomonadota</taxon>
        <taxon>Gammaproteobacteria</taxon>
        <taxon>Enterobacterales</taxon>
        <taxon>Enterobacteriaceae</taxon>
        <taxon>Salmonella</taxon>
    </lineage>
</organism>
<feature type="chain" id="PRO_1000085348" description="Chaperone modulatory protein CbpM">
    <location>
        <begin position="1"/>
        <end position="101"/>
    </location>
</feature>
<accession>A9N6S3</accession>
<protein>
    <recommendedName>
        <fullName evidence="1">Chaperone modulatory protein CbpM</fullName>
    </recommendedName>
</protein>
<evidence type="ECO:0000255" key="1">
    <source>
        <dbReference type="HAMAP-Rule" id="MF_01155"/>
    </source>
</evidence>
<comment type="function">
    <text evidence="1">Interacts with CbpA and inhibits both the DnaJ-like co-chaperone activity and the DNA binding activity of CbpA. Together with CbpA, modulates the activity of the DnaK chaperone system. Does not inhibit the co-chaperone activity of DnaJ.</text>
</comment>
<comment type="similarity">
    <text evidence="1">Belongs to the CbpM family.</text>
</comment>
<name>CBPM_SALPB</name>
<gene>
    <name evidence="1" type="primary">cbpM</name>
    <name type="ordered locus">SPAB_02439</name>
</gene>